<dbReference type="EMBL" id="AK053546">
    <property type="protein sequence ID" value="BAC35423.1"/>
    <property type="molecule type" value="mRNA"/>
</dbReference>
<dbReference type="EMBL" id="AK075645">
    <property type="protein sequence ID" value="BAC35878.1"/>
    <property type="molecule type" value="mRNA"/>
</dbReference>
<dbReference type="EMBL" id="AK163615">
    <property type="protein sequence ID" value="BAE37422.1"/>
    <property type="molecule type" value="mRNA"/>
</dbReference>
<dbReference type="EMBL" id="AK165937">
    <property type="protein sequence ID" value="BAE38471.1"/>
    <property type="molecule type" value="mRNA"/>
</dbReference>
<dbReference type="EMBL" id="BC019462">
    <property type="protein sequence ID" value="AAH19462.1"/>
    <property type="molecule type" value="mRNA"/>
</dbReference>
<dbReference type="EMBL" id="BC026997">
    <property type="protein sequence ID" value="AAH26997.1"/>
    <property type="molecule type" value="mRNA"/>
</dbReference>
<dbReference type="CCDS" id="CCDS27591.1"/>
<dbReference type="RefSeq" id="NP_663447.1">
    <property type="nucleotide sequence ID" value="NM_145472.2"/>
</dbReference>
<dbReference type="RefSeq" id="NP_789798.2">
    <property type="nucleotide sequence ID" value="NM_176828.4"/>
</dbReference>
<dbReference type="FunCoup" id="Q8VE95">
    <property type="interactions" value="654"/>
</dbReference>
<dbReference type="iPTMnet" id="Q8VE95"/>
<dbReference type="PhosphoSitePlus" id="Q8VE95"/>
<dbReference type="SwissPalm" id="Q8VE95"/>
<dbReference type="jPOST" id="Q8VE95"/>
<dbReference type="PeptideAtlas" id="Q8VE95"/>
<dbReference type="Pumba" id="Q8VE95"/>
<dbReference type="Antibodypedia" id="70565">
    <property type="antibodies" value="11 antibodies from 9 providers"/>
</dbReference>
<dbReference type="DNASU" id="223665"/>
<dbReference type="Ensembl" id="ENSMUST00000036247.10">
    <property type="protein sequence ID" value="ENSMUSP00000039910.9"/>
    <property type="gene ID" value="ENSMUSG00000116138.2"/>
</dbReference>
<dbReference type="GeneID" id="223665"/>
<dbReference type="KEGG" id="mmu:223665"/>
<dbReference type="UCSC" id="uc007wmf.2">
    <property type="organism name" value="mouse"/>
</dbReference>
<dbReference type="AGR" id="MGI:1925941"/>
<dbReference type="MGI" id="MGI:1925941">
    <property type="gene designation" value="C030006K11Rik"/>
</dbReference>
<dbReference type="VEuPathDB" id="HostDB:ENSMUSG00000116138"/>
<dbReference type="GeneTree" id="ENSGT00390000011521"/>
<dbReference type="HOGENOM" id="CLU_069446_2_0_1"/>
<dbReference type="InParanoid" id="Q8VE95"/>
<dbReference type="OMA" id="IKNFTSC"/>
<dbReference type="OrthoDB" id="10260024at2759"/>
<dbReference type="PhylomeDB" id="Q8VE95"/>
<dbReference type="TreeFam" id="TF323959"/>
<dbReference type="BioGRID-ORCS" id="223665">
    <property type="hits" value="1 hit in 28 CRISPR screens"/>
</dbReference>
<dbReference type="PRO" id="PR:Q8VE95"/>
<dbReference type="Proteomes" id="UP000000589">
    <property type="component" value="Chromosome 15"/>
</dbReference>
<dbReference type="RNAct" id="Q8VE95">
    <property type="molecule type" value="protein"/>
</dbReference>
<dbReference type="Bgee" id="ENSMUSG00000116138">
    <property type="expression patterns" value="Expressed in brown adipose tissue and 183 other cell types or tissues"/>
</dbReference>
<dbReference type="ExpressionAtlas" id="Q8VE95">
    <property type="expression patterns" value="baseline and differential"/>
</dbReference>
<dbReference type="GO" id="GO:0005739">
    <property type="term" value="C:mitochondrion"/>
    <property type="evidence" value="ECO:0007005"/>
    <property type="project" value="MGI"/>
</dbReference>
<dbReference type="InterPro" id="IPR028108">
    <property type="entry name" value="DUF4505"/>
</dbReference>
<dbReference type="PANTHER" id="PTHR31449">
    <property type="entry name" value="UPF0598 PROTEIN C8ORF82"/>
    <property type="match status" value="1"/>
</dbReference>
<dbReference type="PANTHER" id="PTHR31449:SF3">
    <property type="entry name" value="UPF0598 PROTEIN C8ORF82"/>
    <property type="match status" value="1"/>
</dbReference>
<dbReference type="Pfam" id="PF14956">
    <property type="entry name" value="DUF4505"/>
    <property type="match status" value="1"/>
</dbReference>
<name>CH082_MOUSE</name>
<accession>Q8VE95</accession>
<accession>Q8BK86</accession>
<comment type="similarity">
    <text evidence="1">Belongs to the UPF0598 family.</text>
</comment>
<sequence length="218" mass="24330">MWPPSGAVRNLALVLARSQRARTCSGVERVSYTQGQSPEPRTREYFYYVDHQGQLFLDDSKMKNFITCFKDLQFLVTFFSRLRPNHSGRYEASFPFLSLCGRERNFLRCEDRPVVFTHLLASDSESPRLSYCGGGEALAIPFEPARLLPLAANGRLYHPAPERAGGVGLVRSALAFELSACFEYGPSSPTVPSHVHWQGRRIALTMDLAPLLPAAPPP</sequence>
<proteinExistence type="evidence at protein level"/>
<organism>
    <name type="scientific">Mus musculus</name>
    <name type="common">Mouse</name>
    <dbReference type="NCBI Taxonomy" id="10090"/>
    <lineage>
        <taxon>Eukaryota</taxon>
        <taxon>Metazoa</taxon>
        <taxon>Chordata</taxon>
        <taxon>Craniata</taxon>
        <taxon>Vertebrata</taxon>
        <taxon>Euteleostomi</taxon>
        <taxon>Mammalia</taxon>
        <taxon>Eutheria</taxon>
        <taxon>Euarchontoglires</taxon>
        <taxon>Glires</taxon>
        <taxon>Rodentia</taxon>
        <taxon>Myomorpha</taxon>
        <taxon>Muroidea</taxon>
        <taxon>Muridae</taxon>
        <taxon>Murinae</taxon>
        <taxon>Mus</taxon>
        <taxon>Mus</taxon>
    </lineage>
</organism>
<keyword id="KW-1185">Reference proteome</keyword>
<protein>
    <recommendedName>
        <fullName>UPF0598 protein C8orf82 homolog</fullName>
    </recommendedName>
</protein>
<feature type="chain" id="PRO_0000340670" description="UPF0598 protein C8orf82 homolog">
    <location>
        <begin position="1"/>
        <end position="218"/>
    </location>
</feature>
<feature type="sequence conflict" description="In Ref. 1; BAC35878." evidence="1" ref="1">
    <original>DL</original>
    <variation>EK</variation>
    <location>
        <begin position="71"/>
        <end position="72"/>
    </location>
</feature>
<evidence type="ECO:0000305" key="1"/>
<reference key="1">
    <citation type="journal article" date="2005" name="Science">
        <title>The transcriptional landscape of the mammalian genome.</title>
        <authorList>
            <person name="Carninci P."/>
            <person name="Kasukawa T."/>
            <person name="Katayama S."/>
            <person name="Gough J."/>
            <person name="Frith M.C."/>
            <person name="Maeda N."/>
            <person name="Oyama R."/>
            <person name="Ravasi T."/>
            <person name="Lenhard B."/>
            <person name="Wells C."/>
            <person name="Kodzius R."/>
            <person name="Shimokawa K."/>
            <person name="Bajic V.B."/>
            <person name="Brenner S.E."/>
            <person name="Batalov S."/>
            <person name="Forrest A.R."/>
            <person name="Zavolan M."/>
            <person name="Davis M.J."/>
            <person name="Wilming L.G."/>
            <person name="Aidinis V."/>
            <person name="Allen J.E."/>
            <person name="Ambesi-Impiombato A."/>
            <person name="Apweiler R."/>
            <person name="Aturaliya R.N."/>
            <person name="Bailey T.L."/>
            <person name="Bansal M."/>
            <person name="Baxter L."/>
            <person name="Beisel K.W."/>
            <person name="Bersano T."/>
            <person name="Bono H."/>
            <person name="Chalk A.M."/>
            <person name="Chiu K.P."/>
            <person name="Choudhary V."/>
            <person name="Christoffels A."/>
            <person name="Clutterbuck D.R."/>
            <person name="Crowe M.L."/>
            <person name="Dalla E."/>
            <person name="Dalrymple B.P."/>
            <person name="de Bono B."/>
            <person name="Della Gatta G."/>
            <person name="di Bernardo D."/>
            <person name="Down T."/>
            <person name="Engstrom P."/>
            <person name="Fagiolini M."/>
            <person name="Faulkner G."/>
            <person name="Fletcher C.F."/>
            <person name="Fukushima T."/>
            <person name="Furuno M."/>
            <person name="Futaki S."/>
            <person name="Gariboldi M."/>
            <person name="Georgii-Hemming P."/>
            <person name="Gingeras T.R."/>
            <person name="Gojobori T."/>
            <person name="Green R.E."/>
            <person name="Gustincich S."/>
            <person name="Harbers M."/>
            <person name="Hayashi Y."/>
            <person name="Hensch T.K."/>
            <person name="Hirokawa N."/>
            <person name="Hill D."/>
            <person name="Huminiecki L."/>
            <person name="Iacono M."/>
            <person name="Ikeo K."/>
            <person name="Iwama A."/>
            <person name="Ishikawa T."/>
            <person name="Jakt M."/>
            <person name="Kanapin A."/>
            <person name="Katoh M."/>
            <person name="Kawasawa Y."/>
            <person name="Kelso J."/>
            <person name="Kitamura H."/>
            <person name="Kitano H."/>
            <person name="Kollias G."/>
            <person name="Krishnan S.P."/>
            <person name="Kruger A."/>
            <person name="Kummerfeld S.K."/>
            <person name="Kurochkin I.V."/>
            <person name="Lareau L.F."/>
            <person name="Lazarevic D."/>
            <person name="Lipovich L."/>
            <person name="Liu J."/>
            <person name="Liuni S."/>
            <person name="McWilliam S."/>
            <person name="Madan Babu M."/>
            <person name="Madera M."/>
            <person name="Marchionni L."/>
            <person name="Matsuda H."/>
            <person name="Matsuzawa S."/>
            <person name="Miki H."/>
            <person name="Mignone F."/>
            <person name="Miyake S."/>
            <person name="Morris K."/>
            <person name="Mottagui-Tabar S."/>
            <person name="Mulder N."/>
            <person name="Nakano N."/>
            <person name="Nakauchi H."/>
            <person name="Ng P."/>
            <person name="Nilsson R."/>
            <person name="Nishiguchi S."/>
            <person name="Nishikawa S."/>
            <person name="Nori F."/>
            <person name="Ohara O."/>
            <person name="Okazaki Y."/>
            <person name="Orlando V."/>
            <person name="Pang K.C."/>
            <person name="Pavan W.J."/>
            <person name="Pavesi G."/>
            <person name="Pesole G."/>
            <person name="Petrovsky N."/>
            <person name="Piazza S."/>
            <person name="Reed J."/>
            <person name="Reid J.F."/>
            <person name="Ring B.Z."/>
            <person name="Ringwald M."/>
            <person name="Rost B."/>
            <person name="Ruan Y."/>
            <person name="Salzberg S.L."/>
            <person name="Sandelin A."/>
            <person name="Schneider C."/>
            <person name="Schoenbach C."/>
            <person name="Sekiguchi K."/>
            <person name="Semple C.A."/>
            <person name="Seno S."/>
            <person name="Sessa L."/>
            <person name="Sheng Y."/>
            <person name="Shibata Y."/>
            <person name="Shimada H."/>
            <person name="Shimada K."/>
            <person name="Silva D."/>
            <person name="Sinclair B."/>
            <person name="Sperling S."/>
            <person name="Stupka E."/>
            <person name="Sugiura K."/>
            <person name="Sultana R."/>
            <person name="Takenaka Y."/>
            <person name="Taki K."/>
            <person name="Tammoja K."/>
            <person name="Tan S.L."/>
            <person name="Tang S."/>
            <person name="Taylor M.S."/>
            <person name="Tegner J."/>
            <person name="Teichmann S.A."/>
            <person name="Ueda H.R."/>
            <person name="van Nimwegen E."/>
            <person name="Verardo R."/>
            <person name="Wei C.L."/>
            <person name="Yagi K."/>
            <person name="Yamanishi H."/>
            <person name="Zabarovsky E."/>
            <person name="Zhu S."/>
            <person name="Zimmer A."/>
            <person name="Hide W."/>
            <person name="Bult C."/>
            <person name="Grimmond S.M."/>
            <person name="Teasdale R.D."/>
            <person name="Liu E.T."/>
            <person name="Brusic V."/>
            <person name="Quackenbush J."/>
            <person name="Wahlestedt C."/>
            <person name="Mattick J.S."/>
            <person name="Hume D.A."/>
            <person name="Kai C."/>
            <person name="Sasaki D."/>
            <person name="Tomaru Y."/>
            <person name="Fukuda S."/>
            <person name="Kanamori-Katayama M."/>
            <person name="Suzuki M."/>
            <person name="Aoki J."/>
            <person name="Arakawa T."/>
            <person name="Iida J."/>
            <person name="Imamura K."/>
            <person name="Itoh M."/>
            <person name="Kato T."/>
            <person name="Kawaji H."/>
            <person name="Kawagashira N."/>
            <person name="Kawashima T."/>
            <person name="Kojima M."/>
            <person name="Kondo S."/>
            <person name="Konno H."/>
            <person name="Nakano K."/>
            <person name="Ninomiya N."/>
            <person name="Nishio T."/>
            <person name="Okada M."/>
            <person name="Plessy C."/>
            <person name="Shibata K."/>
            <person name="Shiraki T."/>
            <person name="Suzuki S."/>
            <person name="Tagami M."/>
            <person name="Waki K."/>
            <person name="Watahiki A."/>
            <person name="Okamura-Oho Y."/>
            <person name="Suzuki H."/>
            <person name="Kawai J."/>
            <person name="Hayashizaki Y."/>
        </authorList>
    </citation>
    <scope>NUCLEOTIDE SEQUENCE [LARGE SCALE MRNA]</scope>
    <source>
        <strain>C57BL/6J</strain>
        <tissue>Adipose tissue</tissue>
        <tissue>Eye</tissue>
        <tissue>Lung</tissue>
    </source>
</reference>
<reference key="2">
    <citation type="journal article" date="2004" name="Genome Res.">
        <title>The status, quality, and expansion of the NIH full-length cDNA project: the Mammalian Gene Collection (MGC).</title>
        <authorList>
            <consortium name="The MGC Project Team"/>
        </authorList>
    </citation>
    <scope>NUCLEOTIDE SEQUENCE [LARGE SCALE MRNA]</scope>
    <source>
        <strain>FVB/N</strain>
        <tissue>Mammary tumor</tissue>
    </source>
</reference>
<reference key="3">
    <citation type="journal article" date="2010" name="Cell">
        <title>A tissue-specific atlas of mouse protein phosphorylation and expression.</title>
        <authorList>
            <person name="Huttlin E.L."/>
            <person name="Jedrychowski M.P."/>
            <person name="Elias J.E."/>
            <person name="Goswami T."/>
            <person name="Rad R."/>
            <person name="Beausoleil S.A."/>
            <person name="Villen J."/>
            <person name="Haas W."/>
            <person name="Sowa M.E."/>
            <person name="Gygi S.P."/>
        </authorList>
    </citation>
    <scope>IDENTIFICATION BY MASS SPECTROMETRY [LARGE SCALE ANALYSIS]</scope>
    <source>
        <tissue>Brain</tissue>
        <tissue>Brown adipose tissue</tissue>
        <tissue>Heart</tissue>
        <tissue>Kidney</tissue>
        <tissue>Liver</tissue>
        <tissue>Lung</tissue>
        <tissue>Pancreas</tissue>
        <tissue>Spleen</tissue>
        <tissue>Testis</tissue>
    </source>
</reference>